<organism>
    <name type="scientific">Salmonella dublin (strain CT_02021853)</name>
    <dbReference type="NCBI Taxonomy" id="439851"/>
    <lineage>
        <taxon>Bacteria</taxon>
        <taxon>Pseudomonadati</taxon>
        <taxon>Pseudomonadota</taxon>
        <taxon>Gammaproteobacteria</taxon>
        <taxon>Enterobacterales</taxon>
        <taxon>Enterobacteriaceae</taxon>
        <taxon>Salmonella</taxon>
    </lineage>
</organism>
<feature type="chain" id="PRO_1000186130" description="Regulatory ATPase RavA">
    <location>
        <begin position="1"/>
        <end position="498"/>
    </location>
</feature>
<feature type="binding site" evidence="1">
    <location>
        <position position="23"/>
    </location>
    <ligand>
        <name>ADP</name>
        <dbReference type="ChEBI" id="CHEBI:456216"/>
    </ligand>
</feature>
<feature type="binding site" evidence="1">
    <location>
        <position position="49"/>
    </location>
    <ligand>
        <name>ADP</name>
        <dbReference type="ChEBI" id="CHEBI:456216"/>
    </ligand>
</feature>
<feature type="binding site" evidence="1">
    <location>
        <position position="50"/>
    </location>
    <ligand>
        <name>ADP</name>
        <dbReference type="ChEBI" id="CHEBI:456216"/>
    </ligand>
</feature>
<feature type="binding site" evidence="1">
    <location>
        <position position="51"/>
    </location>
    <ligand>
        <name>ADP</name>
        <dbReference type="ChEBI" id="CHEBI:456216"/>
    </ligand>
</feature>
<feature type="binding site" evidence="1">
    <location>
        <position position="52"/>
    </location>
    <ligand>
        <name>ADP</name>
        <dbReference type="ChEBI" id="CHEBI:456216"/>
    </ligand>
</feature>
<feature type="binding site" evidence="1">
    <location>
        <position position="53"/>
    </location>
    <ligand>
        <name>ADP</name>
        <dbReference type="ChEBI" id="CHEBI:456216"/>
    </ligand>
</feature>
<feature type="binding site" evidence="1">
    <location>
        <position position="54"/>
    </location>
    <ligand>
        <name>ADP</name>
        <dbReference type="ChEBI" id="CHEBI:456216"/>
    </ligand>
</feature>
<feature type="binding site" evidence="1">
    <location>
        <position position="196"/>
    </location>
    <ligand>
        <name>ADP</name>
        <dbReference type="ChEBI" id="CHEBI:456216"/>
    </ligand>
</feature>
<protein>
    <recommendedName>
        <fullName evidence="1">Regulatory ATPase RavA</fullName>
        <ecNumber evidence="1">3.6.1.-</ecNumber>
    </recommendedName>
    <alternativeName>
        <fullName evidence="1">Regulatory ATPase variant A</fullName>
    </alternativeName>
</protein>
<gene>
    <name evidence="1" type="primary">ravA</name>
    <name type="ordered locus">SeD_A4271</name>
</gene>
<keyword id="KW-0067">ATP-binding</keyword>
<keyword id="KW-0143">Chaperone</keyword>
<keyword id="KW-0963">Cytoplasm</keyword>
<keyword id="KW-0378">Hydrolase</keyword>
<keyword id="KW-0547">Nucleotide-binding</keyword>
<accession>B5FN49</accession>
<evidence type="ECO:0000255" key="1">
    <source>
        <dbReference type="HAMAP-Rule" id="MF_01625"/>
    </source>
</evidence>
<dbReference type="EC" id="3.6.1.-" evidence="1"/>
<dbReference type="EMBL" id="CP001144">
    <property type="protein sequence ID" value="ACH76160.1"/>
    <property type="molecule type" value="Genomic_DNA"/>
</dbReference>
<dbReference type="RefSeq" id="WP_000940987.1">
    <property type="nucleotide sequence ID" value="NC_011205.1"/>
</dbReference>
<dbReference type="SMR" id="B5FN49"/>
<dbReference type="KEGG" id="sed:SeD_A4271"/>
<dbReference type="HOGENOM" id="CLU_018678_1_0_6"/>
<dbReference type="Proteomes" id="UP000008322">
    <property type="component" value="Chromosome"/>
</dbReference>
<dbReference type="GO" id="GO:0005737">
    <property type="term" value="C:cytoplasm"/>
    <property type="evidence" value="ECO:0007669"/>
    <property type="project" value="UniProtKB-SubCell"/>
</dbReference>
<dbReference type="GO" id="GO:0005524">
    <property type="term" value="F:ATP binding"/>
    <property type="evidence" value="ECO:0007669"/>
    <property type="project" value="UniProtKB-KW"/>
</dbReference>
<dbReference type="GO" id="GO:0016887">
    <property type="term" value="F:ATP hydrolysis activity"/>
    <property type="evidence" value="ECO:0007669"/>
    <property type="project" value="UniProtKB-UniRule"/>
</dbReference>
<dbReference type="CDD" id="cd00009">
    <property type="entry name" value="AAA"/>
    <property type="match status" value="1"/>
</dbReference>
<dbReference type="FunFam" id="3.40.50.300:FF:000410">
    <property type="entry name" value="ATPase RavA"/>
    <property type="match status" value="1"/>
</dbReference>
<dbReference type="Gene3D" id="1.20.58.1510">
    <property type="match status" value="1"/>
</dbReference>
<dbReference type="Gene3D" id="2.40.128.430">
    <property type="match status" value="1"/>
</dbReference>
<dbReference type="Gene3D" id="3.40.50.300">
    <property type="entry name" value="P-loop containing nucleotide triphosphate hydrolases"/>
    <property type="match status" value="1"/>
</dbReference>
<dbReference type="HAMAP" id="MF_01625">
    <property type="entry name" value="ATPase_RavA"/>
    <property type="match status" value="1"/>
</dbReference>
<dbReference type="InterPro" id="IPR003593">
    <property type="entry name" value="AAA+_ATPase"/>
</dbReference>
<dbReference type="InterPro" id="IPR023671">
    <property type="entry name" value="ATPase_RavA"/>
</dbReference>
<dbReference type="InterPro" id="IPR022547">
    <property type="entry name" value="ATPase_RavA_C"/>
</dbReference>
<dbReference type="InterPro" id="IPR045427">
    <property type="entry name" value="MoxR"/>
</dbReference>
<dbReference type="InterPro" id="IPR027417">
    <property type="entry name" value="P-loop_NTPase"/>
</dbReference>
<dbReference type="InterPro" id="IPR041538">
    <property type="entry name" value="RavA-like_AAA_lid"/>
</dbReference>
<dbReference type="InterPro" id="IPR050513">
    <property type="entry name" value="RavA_ATPases"/>
</dbReference>
<dbReference type="InterPro" id="IPR046898">
    <property type="entry name" value="RavA_LARA_dom"/>
</dbReference>
<dbReference type="InterPro" id="IPR046932">
    <property type="entry name" value="RavA_LARA_sf"/>
</dbReference>
<dbReference type="NCBIfam" id="NF010054">
    <property type="entry name" value="PRK13531.1"/>
    <property type="match status" value="1"/>
</dbReference>
<dbReference type="PANTHER" id="PTHR32204">
    <property type="entry name" value="ATPASE RAVA"/>
    <property type="match status" value="1"/>
</dbReference>
<dbReference type="PANTHER" id="PTHR32204:SF0">
    <property type="entry name" value="ATPASE RAVA"/>
    <property type="match status" value="1"/>
</dbReference>
<dbReference type="Pfam" id="PF17868">
    <property type="entry name" value="AAA_lid_8"/>
    <property type="match status" value="1"/>
</dbReference>
<dbReference type="Pfam" id="PF12592">
    <property type="entry name" value="ATPase_RavA_C"/>
    <property type="match status" value="1"/>
</dbReference>
<dbReference type="Pfam" id="PF20030">
    <property type="entry name" value="bpMoxR"/>
    <property type="match status" value="1"/>
</dbReference>
<dbReference type="Pfam" id="PF20265">
    <property type="entry name" value="LARA_dom"/>
    <property type="match status" value="1"/>
</dbReference>
<dbReference type="SMART" id="SM00382">
    <property type="entry name" value="AAA"/>
    <property type="match status" value="1"/>
</dbReference>
<dbReference type="SUPFAM" id="SSF52540">
    <property type="entry name" value="P-loop containing nucleoside triphosphate hydrolases"/>
    <property type="match status" value="1"/>
</dbReference>
<name>RAVA_SALDC</name>
<proteinExistence type="inferred from homology"/>
<sequence length="498" mass="56673">MAHPHLLAERISRLSSALEKGLYERSHAIRLCLLAALSGESVFLLGPPGIAKSLIARRLKFAFQRARAFEYLMTRFSTPEEVFGPLSIQALKDEGRYERLTTGYLPEAEIVFLDEIWKAGPAILNTLLTAINERHFRNGAFEEKIPMRLLVAASNELPEADSSLEALYDRMLIRLWLDKVQDKANFRSMLVSQQDESDNPVPASLQVSDEEYQQWQKDIGAISLPDPVFELIFTLRQQLDNLPNAPYVSDRRWKKAIRLLQASAFFSGRDAVAPIDLILLKDCLWYDAQSLNLMQQQLEILMTGHAWQQQAMLTRLGGIVQRRLQLQQQQSDKTAFTVIKEGGMFSRRPHYTLPPEASASTLTLLLQKPLKLHDMEVIHITFDRSALELWLTKGGEIRGKLNGIGFAQTLNMEVDNAQHLVVRDISLQGTRLALPGAAEDSMPAEIKQQLETLENDWRQQHTRFSEQQHCLFIHSDWLGRIEASLQDVGEQIRQAQQC</sequence>
<comment type="function">
    <text evidence="1">Component of the RavA-ViaA chaperone complex, which may act on the membrane to optimize the function of some of the respiratory chains. RavA functions as an ATPase.</text>
</comment>
<comment type="catalytic activity">
    <reaction evidence="1">
        <text>ATP + H2O = ADP + phosphate + H(+)</text>
        <dbReference type="Rhea" id="RHEA:13065"/>
        <dbReference type="ChEBI" id="CHEBI:15377"/>
        <dbReference type="ChEBI" id="CHEBI:15378"/>
        <dbReference type="ChEBI" id="CHEBI:30616"/>
        <dbReference type="ChEBI" id="CHEBI:43474"/>
        <dbReference type="ChEBI" id="CHEBI:456216"/>
    </reaction>
</comment>
<comment type="activity regulation">
    <text evidence="1">ATPase activity is stimulated by ViaA.</text>
</comment>
<comment type="subunit">
    <text evidence="1">Homohexamer. Interacts with ViaA.</text>
</comment>
<comment type="subcellular location">
    <subcellularLocation>
        <location evidence="1">Cytoplasm</location>
    </subcellularLocation>
</comment>
<comment type="similarity">
    <text evidence="1">Belongs to the RavA family.</text>
</comment>
<reference key="1">
    <citation type="journal article" date="2011" name="J. Bacteriol.">
        <title>Comparative genomics of 28 Salmonella enterica isolates: evidence for CRISPR-mediated adaptive sublineage evolution.</title>
        <authorList>
            <person name="Fricke W.F."/>
            <person name="Mammel M.K."/>
            <person name="McDermott P.F."/>
            <person name="Tartera C."/>
            <person name="White D.G."/>
            <person name="Leclerc J.E."/>
            <person name="Ravel J."/>
            <person name="Cebula T.A."/>
        </authorList>
    </citation>
    <scope>NUCLEOTIDE SEQUENCE [LARGE SCALE GENOMIC DNA]</scope>
    <source>
        <strain>CT_02021853</strain>
    </source>
</reference>